<dbReference type="EC" id="7.1.1.9"/>
<dbReference type="EMBL" id="M74004">
    <property type="protein sequence ID" value="AAA31679.1"/>
    <property type="molecule type" value="Genomic_DNA"/>
</dbReference>
<dbReference type="PIR" id="I36932">
    <property type="entry name" value="I36932"/>
</dbReference>
<dbReference type="SMR" id="P98020"/>
<dbReference type="GO" id="GO:0005743">
    <property type="term" value="C:mitochondrial inner membrane"/>
    <property type="evidence" value="ECO:0007669"/>
    <property type="project" value="UniProtKB-SubCell"/>
</dbReference>
<dbReference type="GO" id="GO:0005739">
    <property type="term" value="C:mitochondrion"/>
    <property type="evidence" value="ECO:0000250"/>
    <property type="project" value="UniProtKB"/>
</dbReference>
<dbReference type="GO" id="GO:0045277">
    <property type="term" value="C:respiratory chain complex IV"/>
    <property type="evidence" value="ECO:0000250"/>
    <property type="project" value="UniProtKB"/>
</dbReference>
<dbReference type="GO" id="GO:0005507">
    <property type="term" value="F:copper ion binding"/>
    <property type="evidence" value="ECO:0007669"/>
    <property type="project" value="InterPro"/>
</dbReference>
<dbReference type="GO" id="GO:0004129">
    <property type="term" value="F:cytochrome-c oxidase activity"/>
    <property type="evidence" value="ECO:0007669"/>
    <property type="project" value="UniProtKB-EC"/>
</dbReference>
<dbReference type="GO" id="GO:0042773">
    <property type="term" value="P:ATP synthesis coupled electron transport"/>
    <property type="evidence" value="ECO:0007669"/>
    <property type="project" value="TreeGrafter"/>
</dbReference>
<dbReference type="CDD" id="cd13912">
    <property type="entry name" value="CcO_II_C"/>
    <property type="match status" value="1"/>
</dbReference>
<dbReference type="FunFam" id="1.10.287.90:FF:000001">
    <property type="entry name" value="Cytochrome c oxidase subunit 2"/>
    <property type="match status" value="1"/>
</dbReference>
<dbReference type="FunFam" id="2.60.40.420:FF:000001">
    <property type="entry name" value="Cytochrome c oxidase subunit 2"/>
    <property type="match status" value="1"/>
</dbReference>
<dbReference type="Gene3D" id="1.10.287.90">
    <property type="match status" value="1"/>
</dbReference>
<dbReference type="Gene3D" id="2.60.40.420">
    <property type="entry name" value="Cupredoxins - blue copper proteins"/>
    <property type="match status" value="1"/>
</dbReference>
<dbReference type="InterPro" id="IPR045187">
    <property type="entry name" value="CcO_II"/>
</dbReference>
<dbReference type="InterPro" id="IPR002429">
    <property type="entry name" value="CcO_II-like_C"/>
</dbReference>
<dbReference type="InterPro" id="IPR034210">
    <property type="entry name" value="CcO_II_C"/>
</dbReference>
<dbReference type="InterPro" id="IPR001505">
    <property type="entry name" value="Copper_CuA"/>
</dbReference>
<dbReference type="InterPro" id="IPR008972">
    <property type="entry name" value="Cupredoxin"/>
</dbReference>
<dbReference type="InterPro" id="IPR014222">
    <property type="entry name" value="Cyt_c_oxidase_su2"/>
</dbReference>
<dbReference type="InterPro" id="IPR011759">
    <property type="entry name" value="Cyt_c_oxidase_su2_TM_dom"/>
</dbReference>
<dbReference type="InterPro" id="IPR036257">
    <property type="entry name" value="Cyt_c_oxidase_su2_TM_sf"/>
</dbReference>
<dbReference type="NCBIfam" id="TIGR02866">
    <property type="entry name" value="CoxB"/>
    <property type="match status" value="1"/>
</dbReference>
<dbReference type="PANTHER" id="PTHR22888:SF9">
    <property type="entry name" value="CYTOCHROME C OXIDASE SUBUNIT 2"/>
    <property type="match status" value="1"/>
</dbReference>
<dbReference type="PANTHER" id="PTHR22888">
    <property type="entry name" value="CYTOCHROME C OXIDASE, SUBUNIT II"/>
    <property type="match status" value="1"/>
</dbReference>
<dbReference type="Pfam" id="PF00116">
    <property type="entry name" value="COX2"/>
    <property type="match status" value="1"/>
</dbReference>
<dbReference type="Pfam" id="PF02790">
    <property type="entry name" value="COX2_TM"/>
    <property type="match status" value="1"/>
</dbReference>
<dbReference type="PRINTS" id="PR01166">
    <property type="entry name" value="CYCOXIDASEII"/>
</dbReference>
<dbReference type="SUPFAM" id="SSF49503">
    <property type="entry name" value="Cupredoxins"/>
    <property type="match status" value="1"/>
</dbReference>
<dbReference type="SUPFAM" id="SSF81464">
    <property type="entry name" value="Cytochrome c oxidase subunit II-like, transmembrane region"/>
    <property type="match status" value="1"/>
</dbReference>
<dbReference type="PROSITE" id="PS00078">
    <property type="entry name" value="COX2"/>
    <property type="match status" value="1"/>
</dbReference>
<dbReference type="PROSITE" id="PS50857">
    <property type="entry name" value="COX2_CUA"/>
    <property type="match status" value="1"/>
</dbReference>
<dbReference type="PROSITE" id="PS50999">
    <property type="entry name" value="COX2_TM"/>
    <property type="match status" value="1"/>
</dbReference>
<comment type="function">
    <text evidence="2">Component of the cytochrome c oxidase, the last enzyme in the mitochondrial electron transport chain which drives oxidative phosphorylation. The respiratory chain contains 3 multisubunit complexes succinate dehydrogenase (complex II, CII), ubiquinol-cytochrome c oxidoreductase (cytochrome b-c1 complex, complex III, CIII) and cytochrome c oxidase (complex IV, CIV), that cooperate to transfer electrons derived from NADH and succinate to molecular oxygen, creating an electrochemical gradient over the inner membrane that drives transmembrane transport and the ATP synthase. Cytochrome c oxidase is the component of the respiratory chain that catalyzes the reduction of oxygen to water. Electrons originating from reduced cytochrome c in the intermembrane space (IMS) are transferred via the dinuclear copper A center (CU(A)) of subunit 2 and heme A of subunit 1 to the active site in subunit 1, a binuclear center (BNC) formed by heme A3 and copper B (CU(B)). The BNC reduces molecular oxygen to 2 water molecules using 4 electrons from cytochrome c in the IMS and 4 protons from the mitochondrial matrix.</text>
</comment>
<comment type="catalytic activity">
    <reaction evidence="2">
        <text>4 Fe(II)-[cytochrome c] + O2 + 8 H(+)(in) = 4 Fe(III)-[cytochrome c] + 2 H2O + 4 H(+)(out)</text>
        <dbReference type="Rhea" id="RHEA:11436"/>
        <dbReference type="Rhea" id="RHEA-COMP:10350"/>
        <dbReference type="Rhea" id="RHEA-COMP:14399"/>
        <dbReference type="ChEBI" id="CHEBI:15377"/>
        <dbReference type="ChEBI" id="CHEBI:15378"/>
        <dbReference type="ChEBI" id="CHEBI:15379"/>
        <dbReference type="ChEBI" id="CHEBI:29033"/>
        <dbReference type="ChEBI" id="CHEBI:29034"/>
        <dbReference type="EC" id="7.1.1.9"/>
    </reaction>
    <physiologicalReaction direction="left-to-right" evidence="2">
        <dbReference type="Rhea" id="RHEA:11437"/>
    </physiologicalReaction>
</comment>
<comment type="cofactor">
    <cofactor evidence="3">
        <name>Cu cation</name>
        <dbReference type="ChEBI" id="CHEBI:23378"/>
    </cofactor>
    <text evidence="3">Binds a dinuclear copper A center per subunit.</text>
</comment>
<comment type="subunit">
    <text evidence="1 3">Component of the cytochrome c oxidase (complex IV, CIV), a multisubunit enzyme composed of 14 subunits. The complex is composed of a catalytic core of 3 subunits MT-CO1, MT-CO2 and MT-CO3, encoded in the mitochondrial DNA, and 11 supernumerary subunits COX4I, COX5A, COX5B, COX6A, COX6B, COX6C, COX7A, COX7B, COX7C, COX8 and NDUFA4, which are encoded in the nuclear genome. The complex exists as a monomer or a dimer and forms supercomplexes (SCs) in the inner mitochondrial membrane with NADH-ubiquinone oxidoreductase (complex I, CI) and ubiquinol-cytochrome c oxidoreductase (cytochrome b-c1 complex, complex III, CIII), resulting in different assemblies (supercomplex SCI(1)III(2)IV(1) and megacomplex MCI(2)III(2)IV(2)) (By similarity). Found in a complex with TMEM177, COA6, COX18, COX20, SCO1 and SCO2. Interacts with TMEM177 in a COX20-dependent manner. Interacts with COX20. Interacts with COX16 (By similarity).</text>
</comment>
<comment type="subcellular location">
    <subcellularLocation>
        <location evidence="3">Mitochondrion inner membrane</location>
        <topology evidence="3">Multi-pass membrane protein</topology>
    </subcellularLocation>
</comment>
<comment type="similarity">
    <text evidence="4">Belongs to the cytochrome c oxidase subunit 2 family.</text>
</comment>
<organism>
    <name type="scientific">Cercocebus galeritus</name>
    <name type="common">Tana river mangabey</name>
    <dbReference type="NCBI Taxonomy" id="9532"/>
    <lineage>
        <taxon>Eukaryota</taxon>
        <taxon>Metazoa</taxon>
        <taxon>Chordata</taxon>
        <taxon>Craniata</taxon>
        <taxon>Vertebrata</taxon>
        <taxon>Euteleostomi</taxon>
        <taxon>Mammalia</taxon>
        <taxon>Eutheria</taxon>
        <taxon>Euarchontoglires</taxon>
        <taxon>Primates</taxon>
        <taxon>Haplorrhini</taxon>
        <taxon>Catarrhini</taxon>
        <taxon>Cercopithecidae</taxon>
        <taxon>Cercopithecinae</taxon>
        <taxon>Cercocebus</taxon>
    </lineage>
</organism>
<gene>
    <name type="primary">MT-CO2</name>
    <name type="synonym">COII</name>
    <name type="synonym">COX2</name>
    <name type="synonym">COXII</name>
    <name type="synonym">MTCO2</name>
</gene>
<evidence type="ECO:0000250" key="1">
    <source>
        <dbReference type="UniProtKB" id="P00403"/>
    </source>
</evidence>
<evidence type="ECO:0000250" key="2">
    <source>
        <dbReference type="UniProtKB" id="P00410"/>
    </source>
</evidence>
<evidence type="ECO:0000250" key="3">
    <source>
        <dbReference type="UniProtKB" id="P68530"/>
    </source>
</evidence>
<evidence type="ECO:0000305" key="4"/>
<protein>
    <recommendedName>
        <fullName>Cytochrome c oxidase subunit 2</fullName>
        <ecNumber>7.1.1.9</ecNumber>
    </recommendedName>
    <alternativeName>
        <fullName>Cytochrome c oxidase polypeptide II</fullName>
    </alternativeName>
</protein>
<geneLocation type="mitochondrion"/>
<feature type="chain" id="PRO_0000183545" description="Cytochrome c oxidase subunit 2">
    <location>
        <begin position="1"/>
        <end position="227"/>
    </location>
</feature>
<feature type="topological domain" description="Mitochondrial intermembrane" evidence="3">
    <location>
        <begin position="1"/>
        <end position="14"/>
    </location>
</feature>
<feature type="transmembrane region" description="Helical; Name=I" evidence="3">
    <location>
        <begin position="15"/>
        <end position="45"/>
    </location>
</feature>
<feature type="topological domain" description="Mitochondrial matrix" evidence="3">
    <location>
        <begin position="46"/>
        <end position="59"/>
    </location>
</feature>
<feature type="transmembrane region" description="Helical; Name=II" evidence="3">
    <location>
        <begin position="60"/>
        <end position="87"/>
    </location>
</feature>
<feature type="topological domain" description="Mitochondrial intermembrane" evidence="3">
    <location>
        <begin position="88"/>
        <end position="227"/>
    </location>
</feature>
<feature type="binding site" evidence="3">
    <location>
        <position position="161"/>
    </location>
    <ligand>
        <name>Cu cation</name>
        <dbReference type="ChEBI" id="CHEBI:23378"/>
        <label>A1</label>
    </ligand>
</feature>
<feature type="binding site" evidence="3">
    <location>
        <position position="196"/>
    </location>
    <ligand>
        <name>Cu cation</name>
        <dbReference type="ChEBI" id="CHEBI:23378"/>
        <label>A1</label>
    </ligand>
</feature>
<feature type="binding site" evidence="3">
    <location>
        <position position="196"/>
    </location>
    <ligand>
        <name>Cu cation</name>
        <dbReference type="ChEBI" id="CHEBI:23378"/>
        <label>A2</label>
    </ligand>
</feature>
<feature type="binding site" evidence="3">
    <location>
        <position position="198"/>
    </location>
    <ligand>
        <name>Cu cation</name>
        <dbReference type="ChEBI" id="CHEBI:23378"/>
        <label>A2</label>
    </ligand>
</feature>
<feature type="binding site" evidence="3">
    <location>
        <position position="198"/>
    </location>
    <ligand>
        <name>Mg(2+)</name>
        <dbReference type="ChEBI" id="CHEBI:18420"/>
        <note>ligand shared with MT-CO1</note>
    </ligand>
</feature>
<feature type="binding site" evidence="3">
    <location>
        <position position="200"/>
    </location>
    <ligand>
        <name>Cu cation</name>
        <dbReference type="ChEBI" id="CHEBI:23378"/>
        <label>A1</label>
    </ligand>
</feature>
<feature type="binding site" evidence="3">
    <location>
        <position position="200"/>
    </location>
    <ligand>
        <name>Cu cation</name>
        <dbReference type="ChEBI" id="CHEBI:23378"/>
        <label>A2</label>
    </ligand>
</feature>
<feature type="binding site" evidence="3">
    <location>
        <position position="204"/>
    </location>
    <ligand>
        <name>Cu cation</name>
        <dbReference type="ChEBI" id="CHEBI:23378"/>
        <label>A2</label>
    </ligand>
</feature>
<feature type="binding site" evidence="3">
    <location>
        <position position="207"/>
    </location>
    <ligand>
        <name>Cu cation</name>
        <dbReference type="ChEBI" id="CHEBI:23378"/>
        <label>A1</label>
    </ligand>
</feature>
<name>COX2_CERGA</name>
<accession>P98020</accession>
<reference key="1">
    <citation type="journal article" date="1992" name="Mol. Biol. Evol.">
        <title>Mitochondrial DNA phylogeny of the Old-World monkey tribe Papionini.</title>
        <authorList>
            <person name="Disotell T.R."/>
            <person name="Honeycutt R.L."/>
            <person name="Ruvolo M."/>
        </authorList>
    </citation>
    <scope>NUCLEOTIDE SEQUENCE [GENOMIC DNA]</scope>
</reference>
<proteinExistence type="inferred from homology"/>
<sequence>MAHPVQLGLQDATSPVMEELITFHDHALMAMSLISLLVLYALFSTLTTKLTNTNITDAQEMEIIWTILPAIILVLIALPSLRILYLTDEVNNPSFTIKSIGHQWYWTYEYTDYGGLIFNSYMLPPLFLNPGDLRLLEVDNRVVLPIEAPVRMMITSQDVLHSWTIPTLGLKTDAVPGRLNQTVFTATRPGVYYGQCSEICGANHSFMPIVAELIPLKIFEMGPVFTL</sequence>
<keyword id="KW-0186">Copper</keyword>
<keyword id="KW-0249">Electron transport</keyword>
<keyword id="KW-0460">Magnesium</keyword>
<keyword id="KW-0472">Membrane</keyword>
<keyword id="KW-0479">Metal-binding</keyword>
<keyword id="KW-0496">Mitochondrion</keyword>
<keyword id="KW-0999">Mitochondrion inner membrane</keyword>
<keyword id="KW-0679">Respiratory chain</keyword>
<keyword id="KW-1278">Translocase</keyword>
<keyword id="KW-0812">Transmembrane</keyword>
<keyword id="KW-1133">Transmembrane helix</keyword>
<keyword id="KW-0813">Transport</keyword>